<reference key="1">
    <citation type="submission" date="2007-08" db="EMBL/GenBank/DDBJ databases">
        <title>Complete sequence of Shewanella sediminis HAW-EB3.</title>
        <authorList>
            <consortium name="US DOE Joint Genome Institute"/>
            <person name="Copeland A."/>
            <person name="Lucas S."/>
            <person name="Lapidus A."/>
            <person name="Barry K."/>
            <person name="Glavina del Rio T."/>
            <person name="Dalin E."/>
            <person name="Tice H."/>
            <person name="Pitluck S."/>
            <person name="Chertkov O."/>
            <person name="Brettin T."/>
            <person name="Bruce D."/>
            <person name="Detter J.C."/>
            <person name="Han C."/>
            <person name="Schmutz J."/>
            <person name="Larimer F."/>
            <person name="Land M."/>
            <person name="Hauser L."/>
            <person name="Kyrpides N."/>
            <person name="Kim E."/>
            <person name="Zhao J.-S."/>
            <person name="Richardson P."/>
        </authorList>
    </citation>
    <scope>NUCLEOTIDE SEQUENCE [LARGE SCALE GENOMIC DNA]</scope>
    <source>
        <strain>HAW-EB3</strain>
    </source>
</reference>
<comment type="similarity">
    <text evidence="1">Belongs to the UPF0235 family.</text>
</comment>
<protein>
    <recommendedName>
        <fullName evidence="1">UPF0235 protein Ssed_1229</fullName>
    </recommendedName>
</protein>
<keyword id="KW-1185">Reference proteome</keyword>
<name>Y1229_SHESH</name>
<dbReference type="EMBL" id="CP000821">
    <property type="protein sequence ID" value="ABV35840.1"/>
    <property type="molecule type" value="Genomic_DNA"/>
</dbReference>
<dbReference type="RefSeq" id="WP_012141576.1">
    <property type="nucleotide sequence ID" value="NC_009831.1"/>
</dbReference>
<dbReference type="SMR" id="A8FSL7"/>
<dbReference type="STRING" id="425104.Ssed_1229"/>
<dbReference type="KEGG" id="sse:Ssed_1229"/>
<dbReference type="eggNOG" id="COG1872">
    <property type="taxonomic scope" value="Bacteria"/>
</dbReference>
<dbReference type="HOGENOM" id="CLU_130694_5_0_6"/>
<dbReference type="OrthoDB" id="9800587at2"/>
<dbReference type="Proteomes" id="UP000002015">
    <property type="component" value="Chromosome"/>
</dbReference>
<dbReference type="GO" id="GO:0005737">
    <property type="term" value="C:cytoplasm"/>
    <property type="evidence" value="ECO:0007669"/>
    <property type="project" value="TreeGrafter"/>
</dbReference>
<dbReference type="Gene3D" id="3.30.1200.10">
    <property type="entry name" value="YggU-like"/>
    <property type="match status" value="1"/>
</dbReference>
<dbReference type="HAMAP" id="MF_00634">
    <property type="entry name" value="UPF0235"/>
    <property type="match status" value="1"/>
</dbReference>
<dbReference type="InterPro" id="IPR003746">
    <property type="entry name" value="DUF167"/>
</dbReference>
<dbReference type="InterPro" id="IPR036591">
    <property type="entry name" value="YggU-like_sf"/>
</dbReference>
<dbReference type="NCBIfam" id="TIGR00251">
    <property type="entry name" value="DUF167 family protein"/>
    <property type="match status" value="1"/>
</dbReference>
<dbReference type="NCBIfam" id="NF003466">
    <property type="entry name" value="PRK05090.1"/>
    <property type="match status" value="1"/>
</dbReference>
<dbReference type="PANTHER" id="PTHR13420">
    <property type="entry name" value="UPF0235 PROTEIN C15ORF40"/>
    <property type="match status" value="1"/>
</dbReference>
<dbReference type="PANTHER" id="PTHR13420:SF7">
    <property type="entry name" value="UPF0235 PROTEIN C15ORF40"/>
    <property type="match status" value="1"/>
</dbReference>
<dbReference type="Pfam" id="PF02594">
    <property type="entry name" value="DUF167"/>
    <property type="match status" value="1"/>
</dbReference>
<dbReference type="SMART" id="SM01152">
    <property type="entry name" value="DUF167"/>
    <property type="match status" value="1"/>
</dbReference>
<dbReference type="SUPFAM" id="SSF69786">
    <property type="entry name" value="YggU-like"/>
    <property type="match status" value="1"/>
</dbReference>
<proteinExistence type="inferred from homology"/>
<organism>
    <name type="scientific">Shewanella sediminis (strain HAW-EB3)</name>
    <dbReference type="NCBI Taxonomy" id="425104"/>
    <lineage>
        <taxon>Bacteria</taxon>
        <taxon>Pseudomonadati</taxon>
        <taxon>Pseudomonadota</taxon>
        <taxon>Gammaproteobacteria</taxon>
        <taxon>Alteromonadales</taxon>
        <taxon>Shewanellaceae</taxon>
        <taxon>Shewanella</taxon>
    </lineage>
</organism>
<sequence length="95" mass="10493">MLPVSKQQDDLLLNLYIQPKASRDQIVGVHGEELKIAITAPPVDGKANAHLIKYLSKAFKVPKGDIVILKGQLGRHKQIKILSPRLIPEIINALL</sequence>
<evidence type="ECO:0000255" key="1">
    <source>
        <dbReference type="HAMAP-Rule" id="MF_00634"/>
    </source>
</evidence>
<feature type="chain" id="PRO_1000082652" description="UPF0235 protein Ssed_1229">
    <location>
        <begin position="1"/>
        <end position="95"/>
    </location>
</feature>
<gene>
    <name type="ordered locus">Ssed_1229</name>
</gene>
<accession>A8FSL7</accession>